<gene>
    <name evidence="1" type="primary">hemL</name>
    <name type="ordered locus">ECED1_0160</name>
</gene>
<reference key="1">
    <citation type="journal article" date="2009" name="PLoS Genet.">
        <title>Organised genome dynamics in the Escherichia coli species results in highly diverse adaptive paths.</title>
        <authorList>
            <person name="Touchon M."/>
            <person name="Hoede C."/>
            <person name="Tenaillon O."/>
            <person name="Barbe V."/>
            <person name="Baeriswyl S."/>
            <person name="Bidet P."/>
            <person name="Bingen E."/>
            <person name="Bonacorsi S."/>
            <person name="Bouchier C."/>
            <person name="Bouvet O."/>
            <person name="Calteau A."/>
            <person name="Chiapello H."/>
            <person name="Clermont O."/>
            <person name="Cruveiller S."/>
            <person name="Danchin A."/>
            <person name="Diard M."/>
            <person name="Dossat C."/>
            <person name="Karoui M.E."/>
            <person name="Frapy E."/>
            <person name="Garry L."/>
            <person name="Ghigo J.M."/>
            <person name="Gilles A.M."/>
            <person name="Johnson J."/>
            <person name="Le Bouguenec C."/>
            <person name="Lescat M."/>
            <person name="Mangenot S."/>
            <person name="Martinez-Jehanne V."/>
            <person name="Matic I."/>
            <person name="Nassif X."/>
            <person name="Oztas S."/>
            <person name="Petit M.A."/>
            <person name="Pichon C."/>
            <person name="Rouy Z."/>
            <person name="Ruf C.S."/>
            <person name="Schneider D."/>
            <person name="Tourret J."/>
            <person name="Vacherie B."/>
            <person name="Vallenet D."/>
            <person name="Medigue C."/>
            <person name="Rocha E.P.C."/>
            <person name="Denamur E."/>
        </authorList>
    </citation>
    <scope>NUCLEOTIDE SEQUENCE [LARGE SCALE GENOMIC DNA]</scope>
    <source>
        <strain>ED1a</strain>
    </source>
</reference>
<accession>B7MP16</accession>
<sequence>MSKSENLYSAARELIPGGVNSPVRAFTGVGGTPLFIEKADGAYLYDVDGKAYIDYVGSWGPMVLGHNHPAIRNAVIEAAERGLSFGAPTEMEVKMAQLVTELVPTMDMVRMVNSGTEATMSAIRLARGFTGRDKIIKFEGCYHGHADCLLVKAGSGALTLGQPNSPGVPADFAKHTLTCTYNDLASVRAAFEQYPQEIACIIVEPVAGNMNCVPPLPEFLPGLRALCDEFGALLIIDEVMTGFRVALAGAQDYYGVEPDLTCLGKIIGGGMPVGAFGGRRDVMDALAPTGPVYQAGTLSGNPIAMAAGFACLNEVAQPGVHETLDELTTRLAEGLREAAEEAGIPLVVNHVGGMFGIFFTDAESVTCYQDVMACDVERFKRFFHMMLDEGVYLAPSAFEADFMSVAHSMEDINNTIDAARRVFAKL</sequence>
<proteinExistence type="inferred from homology"/>
<dbReference type="EC" id="5.4.3.8" evidence="1"/>
<dbReference type="EMBL" id="CU928162">
    <property type="protein sequence ID" value="CAR06381.1"/>
    <property type="molecule type" value="Genomic_DNA"/>
</dbReference>
<dbReference type="RefSeq" id="WP_000045294.1">
    <property type="nucleotide sequence ID" value="NC_011745.1"/>
</dbReference>
<dbReference type="SMR" id="B7MP16"/>
<dbReference type="KEGG" id="ecq:ECED1_0160"/>
<dbReference type="HOGENOM" id="CLU_016922_1_5_6"/>
<dbReference type="UniPathway" id="UPA00251">
    <property type="reaction ID" value="UER00317"/>
</dbReference>
<dbReference type="Proteomes" id="UP000000748">
    <property type="component" value="Chromosome"/>
</dbReference>
<dbReference type="GO" id="GO:0005737">
    <property type="term" value="C:cytoplasm"/>
    <property type="evidence" value="ECO:0007669"/>
    <property type="project" value="UniProtKB-SubCell"/>
</dbReference>
<dbReference type="GO" id="GO:0042286">
    <property type="term" value="F:glutamate-1-semialdehyde 2,1-aminomutase activity"/>
    <property type="evidence" value="ECO:0007669"/>
    <property type="project" value="UniProtKB-UniRule"/>
</dbReference>
<dbReference type="GO" id="GO:0030170">
    <property type="term" value="F:pyridoxal phosphate binding"/>
    <property type="evidence" value="ECO:0007669"/>
    <property type="project" value="InterPro"/>
</dbReference>
<dbReference type="GO" id="GO:0008483">
    <property type="term" value="F:transaminase activity"/>
    <property type="evidence" value="ECO:0007669"/>
    <property type="project" value="InterPro"/>
</dbReference>
<dbReference type="GO" id="GO:0006782">
    <property type="term" value="P:protoporphyrinogen IX biosynthetic process"/>
    <property type="evidence" value="ECO:0007669"/>
    <property type="project" value="UniProtKB-UniRule"/>
</dbReference>
<dbReference type="CDD" id="cd00610">
    <property type="entry name" value="OAT_like"/>
    <property type="match status" value="1"/>
</dbReference>
<dbReference type="FunFam" id="3.40.640.10:FF:000021">
    <property type="entry name" value="Glutamate-1-semialdehyde 2,1-aminomutase"/>
    <property type="match status" value="1"/>
</dbReference>
<dbReference type="FunFam" id="3.90.1150.10:FF:000012">
    <property type="entry name" value="Glutamate-1-semialdehyde 2,1-aminomutase"/>
    <property type="match status" value="1"/>
</dbReference>
<dbReference type="Gene3D" id="3.90.1150.10">
    <property type="entry name" value="Aspartate Aminotransferase, domain 1"/>
    <property type="match status" value="1"/>
</dbReference>
<dbReference type="Gene3D" id="3.40.640.10">
    <property type="entry name" value="Type I PLP-dependent aspartate aminotransferase-like (Major domain)"/>
    <property type="match status" value="1"/>
</dbReference>
<dbReference type="HAMAP" id="MF_00375">
    <property type="entry name" value="HemL_aminotrans_3"/>
    <property type="match status" value="1"/>
</dbReference>
<dbReference type="InterPro" id="IPR004639">
    <property type="entry name" value="4pyrrol_synth_GluAld_NH2Trfase"/>
</dbReference>
<dbReference type="InterPro" id="IPR005814">
    <property type="entry name" value="Aminotrans_3"/>
</dbReference>
<dbReference type="InterPro" id="IPR049704">
    <property type="entry name" value="Aminotrans_3_PPA_site"/>
</dbReference>
<dbReference type="InterPro" id="IPR015424">
    <property type="entry name" value="PyrdxlP-dep_Trfase"/>
</dbReference>
<dbReference type="InterPro" id="IPR015421">
    <property type="entry name" value="PyrdxlP-dep_Trfase_major"/>
</dbReference>
<dbReference type="InterPro" id="IPR015422">
    <property type="entry name" value="PyrdxlP-dep_Trfase_small"/>
</dbReference>
<dbReference type="NCBIfam" id="TIGR00713">
    <property type="entry name" value="hemL"/>
    <property type="match status" value="1"/>
</dbReference>
<dbReference type="NCBIfam" id="NF000818">
    <property type="entry name" value="PRK00062.1"/>
    <property type="match status" value="1"/>
</dbReference>
<dbReference type="PANTHER" id="PTHR43713">
    <property type="entry name" value="GLUTAMATE-1-SEMIALDEHYDE 2,1-AMINOMUTASE"/>
    <property type="match status" value="1"/>
</dbReference>
<dbReference type="PANTHER" id="PTHR43713:SF3">
    <property type="entry name" value="GLUTAMATE-1-SEMIALDEHYDE 2,1-AMINOMUTASE 1, CHLOROPLASTIC-RELATED"/>
    <property type="match status" value="1"/>
</dbReference>
<dbReference type="Pfam" id="PF00202">
    <property type="entry name" value="Aminotran_3"/>
    <property type="match status" value="1"/>
</dbReference>
<dbReference type="SUPFAM" id="SSF53383">
    <property type="entry name" value="PLP-dependent transferases"/>
    <property type="match status" value="1"/>
</dbReference>
<dbReference type="PROSITE" id="PS00600">
    <property type="entry name" value="AA_TRANSFER_CLASS_3"/>
    <property type="match status" value="1"/>
</dbReference>
<protein>
    <recommendedName>
        <fullName evidence="1">Glutamate-1-semialdehyde 2,1-aminomutase</fullName>
        <shortName evidence="1">GSA</shortName>
        <ecNumber evidence="1">5.4.3.8</ecNumber>
    </recommendedName>
    <alternativeName>
        <fullName evidence="1">Glutamate-1-semialdehyde aminotransferase</fullName>
        <shortName evidence="1">GSA-AT</shortName>
    </alternativeName>
</protein>
<evidence type="ECO:0000255" key="1">
    <source>
        <dbReference type="HAMAP-Rule" id="MF_00375"/>
    </source>
</evidence>
<name>GSA_ECO81</name>
<feature type="chain" id="PRO_1000201020" description="Glutamate-1-semialdehyde 2,1-aminomutase">
    <location>
        <begin position="1"/>
        <end position="426"/>
    </location>
</feature>
<feature type="modified residue" description="N6-(pyridoxal phosphate)lysine" evidence="1">
    <location>
        <position position="265"/>
    </location>
</feature>
<comment type="catalytic activity">
    <reaction evidence="1">
        <text>(S)-4-amino-5-oxopentanoate = 5-aminolevulinate</text>
        <dbReference type="Rhea" id="RHEA:14265"/>
        <dbReference type="ChEBI" id="CHEBI:57501"/>
        <dbReference type="ChEBI" id="CHEBI:356416"/>
        <dbReference type="EC" id="5.4.3.8"/>
    </reaction>
</comment>
<comment type="cofactor">
    <cofactor evidence="1">
        <name>pyridoxal 5'-phosphate</name>
        <dbReference type="ChEBI" id="CHEBI:597326"/>
    </cofactor>
</comment>
<comment type="pathway">
    <text evidence="1">Porphyrin-containing compound metabolism; protoporphyrin-IX biosynthesis; 5-aminolevulinate from L-glutamyl-tRNA(Glu): step 2/2.</text>
</comment>
<comment type="subunit">
    <text evidence="1">Homodimer.</text>
</comment>
<comment type="subcellular location">
    <subcellularLocation>
        <location evidence="1">Cytoplasm</location>
    </subcellularLocation>
</comment>
<comment type="similarity">
    <text evidence="1">Belongs to the class-III pyridoxal-phosphate-dependent aminotransferase family. HemL subfamily.</text>
</comment>
<organism>
    <name type="scientific">Escherichia coli O81 (strain ED1a)</name>
    <dbReference type="NCBI Taxonomy" id="585397"/>
    <lineage>
        <taxon>Bacteria</taxon>
        <taxon>Pseudomonadati</taxon>
        <taxon>Pseudomonadota</taxon>
        <taxon>Gammaproteobacteria</taxon>
        <taxon>Enterobacterales</taxon>
        <taxon>Enterobacteriaceae</taxon>
        <taxon>Escherichia</taxon>
    </lineage>
</organism>
<keyword id="KW-0963">Cytoplasm</keyword>
<keyword id="KW-0413">Isomerase</keyword>
<keyword id="KW-0627">Porphyrin biosynthesis</keyword>
<keyword id="KW-0663">Pyridoxal phosphate</keyword>